<evidence type="ECO:0000255" key="1">
    <source>
        <dbReference type="HAMAP-Rule" id="MF_01325"/>
    </source>
</evidence>
<evidence type="ECO:0000305" key="2"/>
<gene>
    <name evidence="1" type="primary">rplC</name>
    <name type="ordered locus">VV0375</name>
</gene>
<proteinExistence type="inferred from homology"/>
<keyword id="KW-0488">Methylation</keyword>
<keyword id="KW-0687">Ribonucleoprotein</keyword>
<keyword id="KW-0689">Ribosomal protein</keyword>
<keyword id="KW-0694">RNA-binding</keyword>
<keyword id="KW-0699">rRNA-binding</keyword>
<dbReference type="EMBL" id="BA000037">
    <property type="protein sequence ID" value="BAC93139.1"/>
    <property type="molecule type" value="Genomic_DNA"/>
</dbReference>
<dbReference type="RefSeq" id="WP_011149347.1">
    <property type="nucleotide sequence ID" value="NC_005139.1"/>
</dbReference>
<dbReference type="SMR" id="Q7MPI8"/>
<dbReference type="STRING" id="672.VV93_v1c03460"/>
<dbReference type="GeneID" id="93895066"/>
<dbReference type="KEGG" id="vvy:VV0375"/>
<dbReference type="eggNOG" id="COG0087">
    <property type="taxonomic scope" value="Bacteria"/>
</dbReference>
<dbReference type="HOGENOM" id="CLU_044142_4_1_6"/>
<dbReference type="Proteomes" id="UP000002675">
    <property type="component" value="Chromosome I"/>
</dbReference>
<dbReference type="GO" id="GO:0022625">
    <property type="term" value="C:cytosolic large ribosomal subunit"/>
    <property type="evidence" value="ECO:0007669"/>
    <property type="project" value="TreeGrafter"/>
</dbReference>
<dbReference type="GO" id="GO:0019843">
    <property type="term" value="F:rRNA binding"/>
    <property type="evidence" value="ECO:0007669"/>
    <property type="project" value="UniProtKB-UniRule"/>
</dbReference>
<dbReference type="GO" id="GO:0003735">
    <property type="term" value="F:structural constituent of ribosome"/>
    <property type="evidence" value="ECO:0007669"/>
    <property type="project" value="InterPro"/>
</dbReference>
<dbReference type="GO" id="GO:0006412">
    <property type="term" value="P:translation"/>
    <property type="evidence" value="ECO:0007669"/>
    <property type="project" value="UniProtKB-UniRule"/>
</dbReference>
<dbReference type="FunFam" id="2.40.30.10:FF:000004">
    <property type="entry name" value="50S ribosomal protein L3"/>
    <property type="match status" value="1"/>
</dbReference>
<dbReference type="FunFam" id="3.30.160.810:FF:000001">
    <property type="entry name" value="50S ribosomal protein L3"/>
    <property type="match status" value="1"/>
</dbReference>
<dbReference type="Gene3D" id="3.30.160.810">
    <property type="match status" value="1"/>
</dbReference>
<dbReference type="Gene3D" id="2.40.30.10">
    <property type="entry name" value="Translation factors"/>
    <property type="match status" value="1"/>
</dbReference>
<dbReference type="HAMAP" id="MF_01325_B">
    <property type="entry name" value="Ribosomal_uL3_B"/>
    <property type="match status" value="1"/>
</dbReference>
<dbReference type="InterPro" id="IPR000597">
    <property type="entry name" value="Ribosomal_uL3"/>
</dbReference>
<dbReference type="InterPro" id="IPR019927">
    <property type="entry name" value="Ribosomal_uL3_bac/org-type"/>
</dbReference>
<dbReference type="InterPro" id="IPR019926">
    <property type="entry name" value="Ribosomal_uL3_CS"/>
</dbReference>
<dbReference type="InterPro" id="IPR009000">
    <property type="entry name" value="Transl_B-barrel_sf"/>
</dbReference>
<dbReference type="NCBIfam" id="TIGR03625">
    <property type="entry name" value="L3_bact"/>
    <property type="match status" value="1"/>
</dbReference>
<dbReference type="PANTHER" id="PTHR11229">
    <property type="entry name" value="50S RIBOSOMAL PROTEIN L3"/>
    <property type="match status" value="1"/>
</dbReference>
<dbReference type="PANTHER" id="PTHR11229:SF16">
    <property type="entry name" value="LARGE RIBOSOMAL SUBUNIT PROTEIN UL3C"/>
    <property type="match status" value="1"/>
</dbReference>
<dbReference type="Pfam" id="PF00297">
    <property type="entry name" value="Ribosomal_L3"/>
    <property type="match status" value="1"/>
</dbReference>
<dbReference type="SUPFAM" id="SSF50447">
    <property type="entry name" value="Translation proteins"/>
    <property type="match status" value="1"/>
</dbReference>
<dbReference type="PROSITE" id="PS00474">
    <property type="entry name" value="RIBOSOMAL_L3"/>
    <property type="match status" value="1"/>
</dbReference>
<name>RL3_VIBVY</name>
<comment type="function">
    <text evidence="1">One of the primary rRNA binding proteins, it binds directly near the 3'-end of the 23S rRNA, where it nucleates assembly of the 50S subunit.</text>
</comment>
<comment type="subunit">
    <text evidence="1">Part of the 50S ribosomal subunit. Forms a cluster with proteins L14 and L19.</text>
</comment>
<comment type="PTM">
    <text evidence="1">Methylated by PrmB.</text>
</comment>
<comment type="similarity">
    <text evidence="1">Belongs to the universal ribosomal protein uL3 family.</text>
</comment>
<feature type="chain" id="PRO_0000077189" description="Large ribosomal subunit protein uL3">
    <location>
        <begin position="1"/>
        <end position="209"/>
    </location>
</feature>
<feature type="modified residue" description="N5-methylglutamine" evidence="1">
    <location>
        <position position="150"/>
    </location>
</feature>
<sequence length="209" mass="22372">MIGLIGRKVGMTRVFTEEGVSIPVTVVEVEANRIAQVKTLETDGYAAIQVTAGTKKANRVNKAEAGHFAKAGVEAGRGLWEFRLENGEEFAVGSELTVELFNEVKKVDVTGTSKGKGFQGTVKRWNFRTQDMTHGNSLSHRAPGSIGQCQTPGRVFKGKKMAGHMGAERVTTQNLEIVRVDAERNLLLIKGAVPGATGGNVIVKPAVKA</sequence>
<organism>
    <name type="scientific">Vibrio vulnificus (strain YJ016)</name>
    <dbReference type="NCBI Taxonomy" id="196600"/>
    <lineage>
        <taxon>Bacteria</taxon>
        <taxon>Pseudomonadati</taxon>
        <taxon>Pseudomonadota</taxon>
        <taxon>Gammaproteobacteria</taxon>
        <taxon>Vibrionales</taxon>
        <taxon>Vibrionaceae</taxon>
        <taxon>Vibrio</taxon>
    </lineage>
</organism>
<accession>Q7MPI8</accession>
<reference key="1">
    <citation type="journal article" date="2003" name="Genome Res.">
        <title>Comparative genome analysis of Vibrio vulnificus, a marine pathogen.</title>
        <authorList>
            <person name="Chen C.-Y."/>
            <person name="Wu K.-M."/>
            <person name="Chang Y.-C."/>
            <person name="Chang C.-H."/>
            <person name="Tsai H.-C."/>
            <person name="Liao T.-L."/>
            <person name="Liu Y.-M."/>
            <person name="Chen H.-J."/>
            <person name="Shen A.B.-T."/>
            <person name="Li J.-C."/>
            <person name="Su T.-L."/>
            <person name="Shao C.-P."/>
            <person name="Lee C.-T."/>
            <person name="Hor L.-I."/>
            <person name="Tsai S.-F."/>
        </authorList>
    </citation>
    <scope>NUCLEOTIDE SEQUENCE [LARGE SCALE GENOMIC DNA]</scope>
    <source>
        <strain>YJ016</strain>
    </source>
</reference>
<protein>
    <recommendedName>
        <fullName evidence="1">Large ribosomal subunit protein uL3</fullName>
    </recommendedName>
    <alternativeName>
        <fullName evidence="2">50S ribosomal protein L3</fullName>
    </alternativeName>
</protein>